<feature type="chain" id="PRO_0000095263" description="Adenylosuccinate synthetase">
    <location>
        <begin position="1"/>
        <end position="432"/>
    </location>
</feature>
<feature type="active site" description="Proton acceptor" evidence="1">
    <location>
        <position position="14"/>
    </location>
</feature>
<feature type="active site" description="Proton donor" evidence="1">
    <location>
        <position position="42"/>
    </location>
</feature>
<feature type="binding site" evidence="1">
    <location>
        <begin position="13"/>
        <end position="19"/>
    </location>
    <ligand>
        <name>GTP</name>
        <dbReference type="ChEBI" id="CHEBI:37565"/>
    </ligand>
</feature>
<feature type="binding site" description="in other chain" evidence="1">
    <location>
        <begin position="14"/>
        <end position="17"/>
    </location>
    <ligand>
        <name>IMP</name>
        <dbReference type="ChEBI" id="CHEBI:58053"/>
        <note>ligand shared between dimeric partners</note>
    </ligand>
</feature>
<feature type="binding site" evidence="1">
    <location>
        <position position="14"/>
    </location>
    <ligand>
        <name>Mg(2+)</name>
        <dbReference type="ChEBI" id="CHEBI:18420"/>
    </ligand>
</feature>
<feature type="binding site" description="in other chain" evidence="1">
    <location>
        <begin position="39"/>
        <end position="42"/>
    </location>
    <ligand>
        <name>IMP</name>
        <dbReference type="ChEBI" id="CHEBI:58053"/>
        <note>ligand shared between dimeric partners</note>
    </ligand>
</feature>
<feature type="binding site" evidence="1">
    <location>
        <begin position="41"/>
        <end position="43"/>
    </location>
    <ligand>
        <name>GTP</name>
        <dbReference type="ChEBI" id="CHEBI:37565"/>
    </ligand>
</feature>
<feature type="binding site" evidence="1">
    <location>
        <position position="41"/>
    </location>
    <ligand>
        <name>Mg(2+)</name>
        <dbReference type="ChEBI" id="CHEBI:18420"/>
    </ligand>
</feature>
<feature type="binding site" description="in other chain" evidence="1">
    <location>
        <position position="130"/>
    </location>
    <ligand>
        <name>IMP</name>
        <dbReference type="ChEBI" id="CHEBI:58053"/>
        <note>ligand shared between dimeric partners</note>
    </ligand>
</feature>
<feature type="binding site" evidence="1">
    <location>
        <position position="144"/>
    </location>
    <ligand>
        <name>IMP</name>
        <dbReference type="ChEBI" id="CHEBI:58053"/>
        <note>ligand shared between dimeric partners</note>
    </ligand>
</feature>
<feature type="binding site" description="in other chain" evidence="1">
    <location>
        <position position="225"/>
    </location>
    <ligand>
        <name>IMP</name>
        <dbReference type="ChEBI" id="CHEBI:58053"/>
        <note>ligand shared between dimeric partners</note>
    </ligand>
</feature>
<feature type="binding site" description="in other chain" evidence="1">
    <location>
        <position position="240"/>
    </location>
    <ligand>
        <name>IMP</name>
        <dbReference type="ChEBI" id="CHEBI:58053"/>
        <note>ligand shared between dimeric partners</note>
    </ligand>
</feature>
<feature type="binding site" evidence="1">
    <location>
        <begin position="300"/>
        <end position="306"/>
    </location>
    <ligand>
        <name>substrate</name>
    </ligand>
</feature>
<feature type="binding site" description="in other chain" evidence="1">
    <location>
        <position position="304"/>
    </location>
    <ligand>
        <name>IMP</name>
        <dbReference type="ChEBI" id="CHEBI:58053"/>
        <note>ligand shared between dimeric partners</note>
    </ligand>
</feature>
<feature type="binding site" evidence="1">
    <location>
        <position position="306"/>
    </location>
    <ligand>
        <name>GTP</name>
        <dbReference type="ChEBI" id="CHEBI:37565"/>
    </ligand>
</feature>
<feature type="binding site" evidence="1">
    <location>
        <begin position="332"/>
        <end position="334"/>
    </location>
    <ligand>
        <name>GTP</name>
        <dbReference type="ChEBI" id="CHEBI:37565"/>
    </ligand>
</feature>
<feature type="binding site" evidence="1">
    <location>
        <begin position="415"/>
        <end position="417"/>
    </location>
    <ligand>
        <name>GTP</name>
        <dbReference type="ChEBI" id="CHEBI:37565"/>
    </ligand>
</feature>
<feature type="strand" evidence="3">
    <location>
        <begin position="5"/>
        <end position="13"/>
    </location>
</feature>
<feature type="helix" evidence="3">
    <location>
        <begin position="17"/>
        <end position="25"/>
    </location>
</feature>
<feature type="strand" evidence="3">
    <location>
        <begin position="29"/>
        <end position="33"/>
    </location>
</feature>
<feature type="strand" evidence="3">
    <location>
        <begin position="42"/>
        <end position="46"/>
    </location>
</feature>
<feature type="strand" evidence="3">
    <location>
        <begin position="49"/>
        <end position="56"/>
    </location>
</feature>
<feature type="turn" evidence="3">
    <location>
        <begin position="58"/>
        <end position="61"/>
    </location>
</feature>
<feature type="strand" evidence="3">
    <location>
        <begin position="66"/>
        <end position="69"/>
    </location>
</feature>
<feature type="helix" evidence="3">
    <location>
        <begin position="77"/>
        <end position="89"/>
    </location>
</feature>
<feature type="helix" evidence="3">
    <location>
        <begin position="94"/>
        <end position="97"/>
    </location>
</feature>
<feature type="strand" evidence="3">
    <location>
        <begin position="98"/>
        <end position="100"/>
    </location>
</feature>
<feature type="helix" evidence="3">
    <location>
        <begin position="109"/>
        <end position="120"/>
    </location>
</feature>
<feature type="helix" evidence="3">
    <location>
        <begin position="134"/>
        <end position="142"/>
    </location>
</feature>
<feature type="helix" evidence="3">
    <location>
        <begin position="149"/>
        <end position="153"/>
    </location>
</feature>
<feature type="helix" evidence="3">
    <location>
        <begin position="155"/>
        <end position="175"/>
    </location>
</feature>
<feature type="helix" evidence="3">
    <location>
        <begin position="184"/>
        <end position="199"/>
    </location>
</feature>
<feature type="helix" evidence="3">
    <location>
        <begin position="205"/>
        <end position="214"/>
    </location>
</feature>
<feature type="strand" evidence="3">
    <location>
        <begin position="219"/>
        <end position="222"/>
    </location>
</feature>
<feature type="helix" evidence="3">
    <location>
        <begin position="227"/>
        <end position="229"/>
    </location>
</feature>
<feature type="turn" evidence="3">
    <location>
        <begin position="231"/>
        <end position="233"/>
    </location>
</feature>
<feature type="helix" evidence="3">
    <location>
        <begin position="246"/>
        <end position="248"/>
    </location>
</feature>
<feature type="helix" evidence="3">
    <location>
        <begin position="249"/>
        <end position="253"/>
    </location>
</feature>
<feature type="helix" evidence="3">
    <location>
        <begin position="257"/>
        <end position="259"/>
    </location>
</feature>
<feature type="strand" evidence="3">
    <location>
        <begin position="262"/>
        <end position="273"/>
    </location>
</feature>
<feature type="strand" evidence="3">
    <location>
        <begin position="275"/>
        <end position="277"/>
    </location>
</feature>
<feature type="helix" evidence="3">
    <location>
        <begin position="286"/>
        <end position="294"/>
    </location>
</feature>
<feature type="strand" evidence="3">
    <location>
        <begin position="307"/>
        <end position="312"/>
    </location>
</feature>
<feature type="helix" evidence="3">
    <location>
        <begin position="313"/>
        <end position="323"/>
    </location>
</feature>
<feature type="strand" evidence="3">
    <location>
        <begin position="327"/>
        <end position="331"/>
    </location>
</feature>
<feature type="helix" evidence="3">
    <location>
        <begin position="333"/>
        <end position="336"/>
    </location>
</feature>
<feature type="strand" evidence="3">
    <location>
        <begin position="340"/>
        <end position="349"/>
    </location>
</feature>
<feature type="strand" evidence="3">
    <location>
        <begin position="355"/>
        <end position="358"/>
    </location>
</feature>
<feature type="turn" evidence="3">
    <location>
        <begin position="362"/>
        <end position="364"/>
    </location>
</feature>
<feature type="strand" evidence="3">
    <location>
        <begin position="370"/>
        <end position="377"/>
    </location>
</feature>
<feature type="helix" evidence="3">
    <location>
        <begin position="389"/>
        <end position="391"/>
    </location>
</feature>
<feature type="helix" evidence="3">
    <location>
        <begin position="394"/>
        <end position="407"/>
    </location>
</feature>
<feature type="strand" evidence="3">
    <location>
        <begin position="411"/>
        <end position="415"/>
    </location>
</feature>
<feature type="strand" evidence="3">
    <location>
        <begin position="417"/>
        <end position="419"/>
    </location>
</feature>
<feature type="strand" evidence="3">
    <location>
        <begin position="422"/>
        <end position="427"/>
    </location>
</feature>
<organism>
    <name type="scientific">Yersinia pestis</name>
    <dbReference type="NCBI Taxonomy" id="632"/>
    <lineage>
        <taxon>Bacteria</taxon>
        <taxon>Pseudomonadati</taxon>
        <taxon>Pseudomonadota</taxon>
        <taxon>Gammaproteobacteria</taxon>
        <taxon>Enterobacterales</taxon>
        <taxon>Yersiniaceae</taxon>
        <taxon>Yersinia</taxon>
    </lineage>
</organism>
<comment type="function">
    <text evidence="1">Plays an important role in the de novo pathway of purine nucleotide biosynthesis. Catalyzes the first committed step in the biosynthesis of AMP from IMP.</text>
</comment>
<comment type="catalytic activity">
    <reaction evidence="1">
        <text>IMP + L-aspartate + GTP = N(6)-(1,2-dicarboxyethyl)-AMP + GDP + phosphate + 2 H(+)</text>
        <dbReference type="Rhea" id="RHEA:15753"/>
        <dbReference type="ChEBI" id="CHEBI:15378"/>
        <dbReference type="ChEBI" id="CHEBI:29991"/>
        <dbReference type="ChEBI" id="CHEBI:37565"/>
        <dbReference type="ChEBI" id="CHEBI:43474"/>
        <dbReference type="ChEBI" id="CHEBI:57567"/>
        <dbReference type="ChEBI" id="CHEBI:58053"/>
        <dbReference type="ChEBI" id="CHEBI:58189"/>
        <dbReference type="EC" id="6.3.4.4"/>
    </reaction>
</comment>
<comment type="cofactor">
    <cofactor evidence="1">
        <name>Mg(2+)</name>
        <dbReference type="ChEBI" id="CHEBI:18420"/>
    </cofactor>
    <text evidence="1">Binds 1 Mg(2+) ion per subunit.</text>
</comment>
<comment type="pathway">
    <text evidence="1">Purine metabolism; AMP biosynthesis via de novo pathway; AMP from IMP: step 1/2.</text>
</comment>
<comment type="subunit">
    <text evidence="1">Homodimer.</text>
</comment>
<comment type="subcellular location">
    <subcellularLocation>
        <location evidence="1">Cytoplasm</location>
    </subcellularLocation>
</comment>
<comment type="similarity">
    <text evidence="1">Belongs to the adenylosuccinate synthetase family.</text>
</comment>
<comment type="sequence caution" evidence="2">
    <conflict type="erroneous initiation">
        <sequence resource="EMBL-CDS" id="AAM84223"/>
    </conflict>
</comment>
<comment type="sequence caution" evidence="2">
    <conflict type="erroneous initiation">
        <sequence resource="EMBL-CDS" id="AAS60804"/>
    </conflict>
</comment>
<protein>
    <recommendedName>
        <fullName evidence="1">Adenylosuccinate synthetase</fullName>
        <shortName evidence="1">AMPSase</shortName>
        <shortName evidence="1">AdSS</shortName>
        <ecNumber evidence="1">6.3.4.4</ecNumber>
    </recommendedName>
    <alternativeName>
        <fullName evidence="1">IMP--aspartate ligase</fullName>
    </alternativeName>
</protein>
<keyword id="KW-0002">3D-structure</keyword>
<keyword id="KW-0963">Cytoplasm</keyword>
<keyword id="KW-0342">GTP-binding</keyword>
<keyword id="KW-0436">Ligase</keyword>
<keyword id="KW-0460">Magnesium</keyword>
<keyword id="KW-0479">Metal-binding</keyword>
<keyword id="KW-0547">Nucleotide-binding</keyword>
<keyword id="KW-0658">Purine biosynthesis</keyword>
<keyword id="KW-1185">Reference proteome</keyword>
<proteinExistence type="evidence at protein level"/>
<reference key="1">
    <citation type="journal article" date="2001" name="Nature">
        <title>Genome sequence of Yersinia pestis, the causative agent of plague.</title>
        <authorList>
            <person name="Parkhill J."/>
            <person name="Wren B.W."/>
            <person name="Thomson N.R."/>
            <person name="Titball R.W."/>
            <person name="Holden M.T.G."/>
            <person name="Prentice M.B."/>
            <person name="Sebaihia M."/>
            <person name="James K.D."/>
            <person name="Churcher C.M."/>
            <person name="Mungall K.L."/>
            <person name="Baker S."/>
            <person name="Basham D."/>
            <person name="Bentley S.D."/>
            <person name="Brooks K."/>
            <person name="Cerdeno-Tarraga A.-M."/>
            <person name="Chillingworth T."/>
            <person name="Cronin A."/>
            <person name="Davies R.M."/>
            <person name="Davis P."/>
            <person name="Dougan G."/>
            <person name="Feltwell T."/>
            <person name="Hamlin N."/>
            <person name="Holroyd S."/>
            <person name="Jagels K."/>
            <person name="Karlyshev A.V."/>
            <person name="Leather S."/>
            <person name="Moule S."/>
            <person name="Oyston P.C.F."/>
            <person name="Quail M.A."/>
            <person name="Rutherford K.M."/>
            <person name="Simmonds M."/>
            <person name="Skelton J."/>
            <person name="Stevens K."/>
            <person name="Whitehead S."/>
            <person name="Barrell B.G."/>
        </authorList>
    </citation>
    <scope>NUCLEOTIDE SEQUENCE [LARGE SCALE GENOMIC DNA]</scope>
    <source>
        <strain>CO-92 / Biovar Orientalis</strain>
    </source>
</reference>
<reference key="2">
    <citation type="journal article" date="2002" name="J. Bacteriol.">
        <title>Genome sequence of Yersinia pestis KIM.</title>
        <authorList>
            <person name="Deng W."/>
            <person name="Burland V."/>
            <person name="Plunkett G. III"/>
            <person name="Boutin A."/>
            <person name="Mayhew G.F."/>
            <person name="Liss P."/>
            <person name="Perna N.T."/>
            <person name="Rose D.J."/>
            <person name="Mau B."/>
            <person name="Zhou S."/>
            <person name="Schwartz D.C."/>
            <person name="Fetherston J.D."/>
            <person name="Lindler L.E."/>
            <person name="Brubaker R.R."/>
            <person name="Plano G.V."/>
            <person name="Straley S.C."/>
            <person name="McDonough K.A."/>
            <person name="Nilles M.L."/>
            <person name="Matson J.S."/>
            <person name="Blattner F.R."/>
            <person name="Perry R.D."/>
        </authorList>
    </citation>
    <scope>NUCLEOTIDE SEQUENCE [LARGE SCALE GENOMIC DNA]</scope>
    <source>
        <strain>KIM10+ / Biovar Mediaevalis</strain>
    </source>
</reference>
<reference key="3">
    <citation type="journal article" date="2004" name="DNA Res.">
        <title>Complete genome sequence of Yersinia pestis strain 91001, an isolate avirulent to humans.</title>
        <authorList>
            <person name="Song Y."/>
            <person name="Tong Z."/>
            <person name="Wang J."/>
            <person name="Wang L."/>
            <person name="Guo Z."/>
            <person name="Han Y."/>
            <person name="Zhang J."/>
            <person name="Pei D."/>
            <person name="Zhou D."/>
            <person name="Qin H."/>
            <person name="Pang X."/>
            <person name="Han Y."/>
            <person name="Zhai J."/>
            <person name="Li M."/>
            <person name="Cui B."/>
            <person name="Qi Z."/>
            <person name="Jin L."/>
            <person name="Dai R."/>
            <person name="Chen F."/>
            <person name="Li S."/>
            <person name="Ye C."/>
            <person name="Du Z."/>
            <person name="Lin W."/>
            <person name="Wang J."/>
            <person name="Yu J."/>
            <person name="Yang H."/>
            <person name="Wang J."/>
            <person name="Huang P."/>
            <person name="Yang R."/>
        </authorList>
    </citation>
    <scope>NUCLEOTIDE SEQUENCE [LARGE SCALE GENOMIC DNA]</scope>
    <source>
        <strain>91001 / Biovar Mediaevalis</strain>
    </source>
</reference>
<gene>
    <name evidence="1" type="primary">purA</name>
    <name type="ordered locus">YPO0378</name>
    <name type="ordered locus">y0635</name>
    <name type="ordered locus">YP_0534</name>
</gene>
<evidence type="ECO:0000255" key="1">
    <source>
        <dbReference type="HAMAP-Rule" id="MF_00011"/>
    </source>
</evidence>
<evidence type="ECO:0000305" key="2"/>
<evidence type="ECO:0007829" key="3">
    <source>
        <dbReference type="PDB" id="3HID"/>
    </source>
</evidence>
<sequence length="432" mass="47278">MGKNVVVLGTQWGDEGKGKVVDLLTERAKYVVRYQGGHNAGHTLVINGEKTVLHLIPSGILRENVISIIGNGVVLAPDALMKEMTELEARGVPVRERLLLSEACPLILPYHVALDNAREKARGAKAIGTTGRGIGPAYEDKVARRGLRVSDLFNKETFAIKLKEIVEYHNFQLVHYYKEAAVDYQKVLDDVLAIADILTAMVVDVSELLDNARKQGELIMFEGAQGTLLDIDHGTYPYVTSSNTTAGGVATGSGLGPRYVDYVLGIVKAYSTRVGAGPFPTELNDETGEFLRKQGNEYGATTGRSRRTGWLDIVAVRRAVQINSLSGFCMTKLDVLDGLKEVKLCVGYRMPDGREVDTTPLAAEGWEGIEPIYETMPGWSETTFGVKEHSKLPQAALNYIQRVEELTGVPIDIISTGPDRDETMILRDPFDA</sequence>
<accession>Q8ZIV7</accession>
<accession>Q0WJT2</accession>
<dbReference type="EC" id="6.3.4.4" evidence="1"/>
<dbReference type="EMBL" id="AL590842">
    <property type="protein sequence ID" value="CAL19060.1"/>
    <property type="molecule type" value="Genomic_DNA"/>
</dbReference>
<dbReference type="EMBL" id="AE009952">
    <property type="protein sequence ID" value="AAM84223.1"/>
    <property type="status" value="ALT_INIT"/>
    <property type="molecule type" value="Genomic_DNA"/>
</dbReference>
<dbReference type="EMBL" id="AE017042">
    <property type="protein sequence ID" value="AAS60804.1"/>
    <property type="status" value="ALT_INIT"/>
    <property type="molecule type" value="Genomic_DNA"/>
</dbReference>
<dbReference type="PIR" id="AB0047">
    <property type="entry name" value="AB0047"/>
</dbReference>
<dbReference type="RefSeq" id="WP_002209157.1">
    <property type="nucleotide sequence ID" value="NZ_WUCM01000083.1"/>
</dbReference>
<dbReference type="RefSeq" id="YP_002345456.1">
    <property type="nucleotide sequence ID" value="NC_003143.1"/>
</dbReference>
<dbReference type="PDB" id="3HID">
    <property type="method" value="X-ray"/>
    <property type="resolution" value="1.60 A"/>
    <property type="chains" value="A=1-432"/>
</dbReference>
<dbReference type="PDBsum" id="3HID"/>
<dbReference type="SMR" id="Q8ZIV7"/>
<dbReference type="IntAct" id="Q8ZIV7">
    <property type="interactions" value="1"/>
</dbReference>
<dbReference type="STRING" id="214092.YPO0378"/>
<dbReference type="DrugBank" id="DB02580">
    <property type="generic name" value="Pentaglyme"/>
</dbReference>
<dbReference type="PaxDb" id="214092-YPO0378"/>
<dbReference type="DNASU" id="1145582"/>
<dbReference type="EnsemblBacteria" id="AAS60804">
    <property type="protein sequence ID" value="AAS60804"/>
    <property type="gene ID" value="YP_0534"/>
</dbReference>
<dbReference type="KEGG" id="ype:YPO0378"/>
<dbReference type="KEGG" id="ypk:y0635"/>
<dbReference type="KEGG" id="ypm:YP_0534"/>
<dbReference type="PATRIC" id="fig|214092.21.peg.615"/>
<dbReference type="eggNOG" id="COG0104">
    <property type="taxonomic scope" value="Bacteria"/>
</dbReference>
<dbReference type="HOGENOM" id="CLU_029848_0_0_6"/>
<dbReference type="OMA" id="FHHAKPI"/>
<dbReference type="OrthoDB" id="9807553at2"/>
<dbReference type="UniPathway" id="UPA00075">
    <property type="reaction ID" value="UER00335"/>
</dbReference>
<dbReference type="EvolutionaryTrace" id="Q8ZIV7"/>
<dbReference type="Proteomes" id="UP000000815">
    <property type="component" value="Chromosome"/>
</dbReference>
<dbReference type="Proteomes" id="UP000001019">
    <property type="component" value="Chromosome"/>
</dbReference>
<dbReference type="Proteomes" id="UP000002490">
    <property type="component" value="Chromosome"/>
</dbReference>
<dbReference type="GO" id="GO:0005737">
    <property type="term" value="C:cytoplasm"/>
    <property type="evidence" value="ECO:0000318"/>
    <property type="project" value="GO_Central"/>
</dbReference>
<dbReference type="GO" id="GO:0004019">
    <property type="term" value="F:adenylosuccinate synthase activity"/>
    <property type="evidence" value="ECO:0000318"/>
    <property type="project" value="GO_Central"/>
</dbReference>
<dbReference type="GO" id="GO:0005525">
    <property type="term" value="F:GTP binding"/>
    <property type="evidence" value="ECO:0007669"/>
    <property type="project" value="UniProtKB-UniRule"/>
</dbReference>
<dbReference type="GO" id="GO:0000287">
    <property type="term" value="F:magnesium ion binding"/>
    <property type="evidence" value="ECO:0007669"/>
    <property type="project" value="UniProtKB-UniRule"/>
</dbReference>
<dbReference type="GO" id="GO:0044208">
    <property type="term" value="P:'de novo' AMP biosynthetic process"/>
    <property type="evidence" value="ECO:0000318"/>
    <property type="project" value="GO_Central"/>
</dbReference>
<dbReference type="GO" id="GO:0046040">
    <property type="term" value="P:IMP metabolic process"/>
    <property type="evidence" value="ECO:0000318"/>
    <property type="project" value="GO_Central"/>
</dbReference>
<dbReference type="CDD" id="cd03108">
    <property type="entry name" value="AdSS"/>
    <property type="match status" value="1"/>
</dbReference>
<dbReference type="FunFam" id="1.10.300.10:FF:000001">
    <property type="entry name" value="Adenylosuccinate synthetase"/>
    <property type="match status" value="1"/>
</dbReference>
<dbReference type="FunFam" id="3.90.170.10:FF:000001">
    <property type="entry name" value="Adenylosuccinate synthetase"/>
    <property type="match status" value="1"/>
</dbReference>
<dbReference type="Gene3D" id="3.40.440.10">
    <property type="entry name" value="Adenylosuccinate Synthetase, subunit A, domain 1"/>
    <property type="match status" value="1"/>
</dbReference>
<dbReference type="Gene3D" id="1.10.300.10">
    <property type="entry name" value="Adenylosuccinate Synthetase, subunit A, domain 2"/>
    <property type="match status" value="1"/>
</dbReference>
<dbReference type="Gene3D" id="3.90.170.10">
    <property type="entry name" value="Adenylosuccinate Synthetase, subunit A, domain 3"/>
    <property type="match status" value="1"/>
</dbReference>
<dbReference type="HAMAP" id="MF_00011">
    <property type="entry name" value="Adenylosucc_synth"/>
    <property type="match status" value="1"/>
</dbReference>
<dbReference type="InterPro" id="IPR018220">
    <property type="entry name" value="Adenylosuccin_syn_GTP-bd"/>
</dbReference>
<dbReference type="InterPro" id="IPR033128">
    <property type="entry name" value="Adenylosuccin_syn_Lys_AS"/>
</dbReference>
<dbReference type="InterPro" id="IPR042109">
    <property type="entry name" value="Adenylosuccinate_synth_dom1"/>
</dbReference>
<dbReference type="InterPro" id="IPR042110">
    <property type="entry name" value="Adenylosuccinate_synth_dom2"/>
</dbReference>
<dbReference type="InterPro" id="IPR042111">
    <property type="entry name" value="Adenylosuccinate_synth_dom3"/>
</dbReference>
<dbReference type="InterPro" id="IPR001114">
    <property type="entry name" value="Adenylosuccinate_synthetase"/>
</dbReference>
<dbReference type="InterPro" id="IPR027417">
    <property type="entry name" value="P-loop_NTPase"/>
</dbReference>
<dbReference type="NCBIfam" id="NF002223">
    <property type="entry name" value="PRK01117.1"/>
    <property type="match status" value="1"/>
</dbReference>
<dbReference type="NCBIfam" id="TIGR00184">
    <property type="entry name" value="purA"/>
    <property type="match status" value="1"/>
</dbReference>
<dbReference type="PANTHER" id="PTHR11846">
    <property type="entry name" value="ADENYLOSUCCINATE SYNTHETASE"/>
    <property type="match status" value="1"/>
</dbReference>
<dbReference type="PANTHER" id="PTHR11846:SF0">
    <property type="entry name" value="ADENYLOSUCCINATE SYNTHETASE"/>
    <property type="match status" value="1"/>
</dbReference>
<dbReference type="Pfam" id="PF00709">
    <property type="entry name" value="Adenylsucc_synt"/>
    <property type="match status" value="1"/>
</dbReference>
<dbReference type="SMART" id="SM00788">
    <property type="entry name" value="Adenylsucc_synt"/>
    <property type="match status" value="1"/>
</dbReference>
<dbReference type="SUPFAM" id="SSF52540">
    <property type="entry name" value="P-loop containing nucleoside triphosphate hydrolases"/>
    <property type="match status" value="1"/>
</dbReference>
<dbReference type="PROSITE" id="PS01266">
    <property type="entry name" value="ADENYLOSUCCIN_SYN_1"/>
    <property type="match status" value="1"/>
</dbReference>
<dbReference type="PROSITE" id="PS00513">
    <property type="entry name" value="ADENYLOSUCCIN_SYN_2"/>
    <property type="match status" value="1"/>
</dbReference>
<name>PURA_YERPE</name>